<reference key="1">
    <citation type="journal article" date="2007" name="PLoS Genet.">
        <title>The complete genome sequence of Yersinia pseudotuberculosis IP31758, the causative agent of Far East scarlet-like fever.</title>
        <authorList>
            <person name="Eppinger M."/>
            <person name="Rosovitz M.J."/>
            <person name="Fricke W.F."/>
            <person name="Rasko D.A."/>
            <person name="Kokorina G."/>
            <person name="Fayolle C."/>
            <person name="Lindler L.E."/>
            <person name="Carniel E."/>
            <person name="Ravel J."/>
        </authorList>
    </citation>
    <scope>NUCLEOTIDE SEQUENCE [LARGE SCALE GENOMIC DNA]</scope>
    <source>
        <strain>IP 31758</strain>
    </source>
</reference>
<accession>A7FM65</accession>
<gene>
    <name evidence="1" type="primary">murC</name>
    <name type="ordered locus">YpsIP31758_3386</name>
</gene>
<protein>
    <recommendedName>
        <fullName evidence="1">UDP-N-acetylmuramate--L-alanine ligase</fullName>
        <ecNumber evidence="1">6.3.2.8</ecNumber>
    </recommendedName>
    <alternativeName>
        <fullName evidence="1">UDP-N-acetylmuramoyl-L-alanine synthetase</fullName>
    </alternativeName>
</protein>
<dbReference type="EC" id="6.3.2.8" evidence="1"/>
<dbReference type="EMBL" id="CP000720">
    <property type="protein sequence ID" value="ABS48885.1"/>
    <property type="status" value="ALT_INIT"/>
    <property type="molecule type" value="Genomic_DNA"/>
</dbReference>
<dbReference type="RefSeq" id="WP_002216457.1">
    <property type="nucleotide sequence ID" value="NC_009708.1"/>
</dbReference>
<dbReference type="SMR" id="A7FM65"/>
<dbReference type="GeneID" id="57974059"/>
<dbReference type="KEGG" id="ypi:YpsIP31758_3386"/>
<dbReference type="HOGENOM" id="CLU_028104_2_2_6"/>
<dbReference type="UniPathway" id="UPA00219"/>
<dbReference type="Proteomes" id="UP000002412">
    <property type="component" value="Chromosome"/>
</dbReference>
<dbReference type="GO" id="GO:0005737">
    <property type="term" value="C:cytoplasm"/>
    <property type="evidence" value="ECO:0007669"/>
    <property type="project" value="UniProtKB-SubCell"/>
</dbReference>
<dbReference type="GO" id="GO:0005524">
    <property type="term" value="F:ATP binding"/>
    <property type="evidence" value="ECO:0007669"/>
    <property type="project" value="UniProtKB-UniRule"/>
</dbReference>
<dbReference type="GO" id="GO:0008763">
    <property type="term" value="F:UDP-N-acetylmuramate-L-alanine ligase activity"/>
    <property type="evidence" value="ECO:0007669"/>
    <property type="project" value="UniProtKB-UniRule"/>
</dbReference>
<dbReference type="GO" id="GO:0051301">
    <property type="term" value="P:cell division"/>
    <property type="evidence" value="ECO:0007669"/>
    <property type="project" value="UniProtKB-KW"/>
</dbReference>
<dbReference type="GO" id="GO:0071555">
    <property type="term" value="P:cell wall organization"/>
    <property type="evidence" value="ECO:0007669"/>
    <property type="project" value="UniProtKB-KW"/>
</dbReference>
<dbReference type="GO" id="GO:0009252">
    <property type="term" value="P:peptidoglycan biosynthetic process"/>
    <property type="evidence" value="ECO:0007669"/>
    <property type="project" value="UniProtKB-UniRule"/>
</dbReference>
<dbReference type="GO" id="GO:0008360">
    <property type="term" value="P:regulation of cell shape"/>
    <property type="evidence" value="ECO:0007669"/>
    <property type="project" value="UniProtKB-KW"/>
</dbReference>
<dbReference type="CDD" id="cd01983">
    <property type="entry name" value="SIMIBI"/>
    <property type="match status" value="1"/>
</dbReference>
<dbReference type="FunFam" id="3.40.1190.10:FF:000001">
    <property type="entry name" value="UDP-N-acetylmuramate--L-alanine ligase"/>
    <property type="match status" value="1"/>
</dbReference>
<dbReference type="FunFam" id="3.40.50.720:FF:000046">
    <property type="entry name" value="UDP-N-acetylmuramate--L-alanine ligase"/>
    <property type="match status" value="1"/>
</dbReference>
<dbReference type="FunFam" id="3.90.190.20:FF:000001">
    <property type="entry name" value="UDP-N-acetylmuramate--L-alanine ligase"/>
    <property type="match status" value="1"/>
</dbReference>
<dbReference type="Gene3D" id="3.90.190.20">
    <property type="entry name" value="Mur ligase, C-terminal domain"/>
    <property type="match status" value="1"/>
</dbReference>
<dbReference type="Gene3D" id="3.40.1190.10">
    <property type="entry name" value="Mur-like, catalytic domain"/>
    <property type="match status" value="1"/>
</dbReference>
<dbReference type="Gene3D" id="3.40.50.720">
    <property type="entry name" value="NAD(P)-binding Rossmann-like Domain"/>
    <property type="match status" value="1"/>
</dbReference>
<dbReference type="HAMAP" id="MF_00046">
    <property type="entry name" value="MurC"/>
    <property type="match status" value="1"/>
</dbReference>
<dbReference type="InterPro" id="IPR036565">
    <property type="entry name" value="Mur-like_cat_sf"/>
</dbReference>
<dbReference type="InterPro" id="IPR004101">
    <property type="entry name" value="Mur_ligase_C"/>
</dbReference>
<dbReference type="InterPro" id="IPR036615">
    <property type="entry name" value="Mur_ligase_C_dom_sf"/>
</dbReference>
<dbReference type="InterPro" id="IPR013221">
    <property type="entry name" value="Mur_ligase_cen"/>
</dbReference>
<dbReference type="InterPro" id="IPR000713">
    <property type="entry name" value="Mur_ligase_N"/>
</dbReference>
<dbReference type="InterPro" id="IPR050061">
    <property type="entry name" value="MurCDEF_pg_biosynth"/>
</dbReference>
<dbReference type="InterPro" id="IPR005758">
    <property type="entry name" value="UDP-N-AcMur_Ala_ligase_MurC"/>
</dbReference>
<dbReference type="NCBIfam" id="TIGR01082">
    <property type="entry name" value="murC"/>
    <property type="match status" value="1"/>
</dbReference>
<dbReference type="PANTHER" id="PTHR43445:SF3">
    <property type="entry name" value="UDP-N-ACETYLMURAMATE--L-ALANINE LIGASE"/>
    <property type="match status" value="1"/>
</dbReference>
<dbReference type="PANTHER" id="PTHR43445">
    <property type="entry name" value="UDP-N-ACETYLMURAMATE--L-ALANINE LIGASE-RELATED"/>
    <property type="match status" value="1"/>
</dbReference>
<dbReference type="Pfam" id="PF01225">
    <property type="entry name" value="Mur_ligase"/>
    <property type="match status" value="1"/>
</dbReference>
<dbReference type="Pfam" id="PF02875">
    <property type="entry name" value="Mur_ligase_C"/>
    <property type="match status" value="1"/>
</dbReference>
<dbReference type="Pfam" id="PF08245">
    <property type="entry name" value="Mur_ligase_M"/>
    <property type="match status" value="1"/>
</dbReference>
<dbReference type="SUPFAM" id="SSF51984">
    <property type="entry name" value="MurCD N-terminal domain"/>
    <property type="match status" value="1"/>
</dbReference>
<dbReference type="SUPFAM" id="SSF53623">
    <property type="entry name" value="MurD-like peptide ligases, catalytic domain"/>
    <property type="match status" value="1"/>
</dbReference>
<dbReference type="SUPFAM" id="SSF53244">
    <property type="entry name" value="MurD-like peptide ligases, peptide-binding domain"/>
    <property type="match status" value="1"/>
</dbReference>
<comment type="function">
    <text evidence="1">Cell wall formation.</text>
</comment>
<comment type="catalytic activity">
    <reaction evidence="1">
        <text>UDP-N-acetyl-alpha-D-muramate + L-alanine + ATP = UDP-N-acetyl-alpha-D-muramoyl-L-alanine + ADP + phosphate + H(+)</text>
        <dbReference type="Rhea" id="RHEA:23372"/>
        <dbReference type="ChEBI" id="CHEBI:15378"/>
        <dbReference type="ChEBI" id="CHEBI:30616"/>
        <dbReference type="ChEBI" id="CHEBI:43474"/>
        <dbReference type="ChEBI" id="CHEBI:57972"/>
        <dbReference type="ChEBI" id="CHEBI:70757"/>
        <dbReference type="ChEBI" id="CHEBI:83898"/>
        <dbReference type="ChEBI" id="CHEBI:456216"/>
        <dbReference type="EC" id="6.3.2.8"/>
    </reaction>
</comment>
<comment type="pathway">
    <text evidence="1">Cell wall biogenesis; peptidoglycan biosynthesis.</text>
</comment>
<comment type="subcellular location">
    <subcellularLocation>
        <location evidence="1">Cytoplasm</location>
    </subcellularLocation>
</comment>
<comment type="similarity">
    <text evidence="1">Belongs to the MurCDEF family.</text>
</comment>
<comment type="sequence caution" evidence="2">
    <conflict type="erroneous initiation">
        <sequence resource="EMBL-CDS" id="ABS48885"/>
    </conflict>
</comment>
<organism>
    <name type="scientific">Yersinia pseudotuberculosis serotype O:1b (strain IP 31758)</name>
    <dbReference type="NCBI Taxonomy" id="349747"/>
    <lineage>
        <taxon>Bacteria</taxon>
        <taxon>Pseudomonadati</taxon>
        <taxon>Pseudomonadota</taxon>
        <taxon>Gammaproteobacteria</taxon>
        <taxon>Enterobacterales</taxon>
        <taxon>Yersiniaceae</taxon>
        <taxon>Yersinia</taxon>
    </lineage>
</organism>
<proteinExistence type="inferred from homology"/>
<name>MURC_YERP3</name>
<sequence>MNTQQLAKLRTIVPEMRRVRHIHFVGIGGAGMGGIAEVLANEGYQISGSDLAPNSVTQHLTALGAQIYFHHRPENVLDASVVVVSTAISADNPEIVAAREARIPVIRRAEMLAELMRYRHGIAVAGTHGKTTTTAMLSSIYAEAGLDPTFVNGGLVKAAGTHARLGSSRYLIAEADESDASFLHLQPMVAIVTNIEADHMDTYQGDFENLKQTFINFLHNLPFYGRAVMCIDDPVVRELLPRVGRHITTYGFSDDADVQIASYRQEGPQGHFTLRRQDKPLIEVTLNAPGRHNALNAAAAVAVATEEGIEDEDILRALVGFQGTGRRFDFLGNFPLAPVNGKEGSAMLVDDYGHHPTEVDATIKAARAGWPDKRIVMLFQPHRYTRTRDLYDDFANVLSQVDVLLMLDVYAAGEPPIPGADSRALCRTIRNRGKLDPILVPDSESAPEMLAQILNGEDLILVQGAGNIGKIARKLAEHKLQPQLKDEEHHG</sequence>
<feature type="chain" id="PRO_0000336880" description="UDP-N-acetylmuramate--L-alanine ligase">
    <location>
        <begin position="1"/>
        <end position="491"/>
    </location>
</feature>
<feature type="binding site" evidence="1">
    <location>
        <begin position="126"/>
        <end position="132"/>
    </location>
    <ligand>
        <name>ATP</name>
        <dbReference type="ChEBI" id="CHEBI:30616"/>
    </ligand>
</feature>
<evidence type="ECO:0000255" key="1">
    <source>
        <dbReference type="HAMAP-Rule" id="MF_00046"/>
    </source>
</evidence>
<evidence type="ECO:0000305" key="2"/>
<keyword id="KW-0067">ATP-binding</keyword>
<keyword id="KW-0131">Cell cycle</keyword>
<keyword id="KW-0132">Cell division</keyword>
<keyword id="KW-0133">Cell shape</keyword>
<keyword id="KW-0961">Cell wall biogenesis/degradation</keyword>
<keyword id="KW-0963">Cytoplasm</keyword>
<keyword id="KW-0436">Ligase</keyword>
<keyword id="KW-0547">Nucleotide-binding</keyword>
<keyword id="KW-0573">Peptidoglycan synthesis</keyword>